<comment type="function">
    <text evidence="5">May be involved in ripening of fruits.</text>
</comment>
<comment type="subunit">
    <text evidence="1">Monomer.</text>
</comment>
<comment type="allergen">
    <text evidence="2 3">May cause an allergic reaction in human (PubMed:15507096, PubMed:16945416). Binds to IgE of patients allergic to strawberry, birch Bet v 1 and apple Mal d 1 (PubMed:15507096, PubMed:16945416). Causes degranulation of basophils sensitized with IgE of patients allergic to strawberry, birch Bet v 1 and apple Mal d 1 (PubMed:15507096).</text>
</comment>
<comment type="similarity">
    <text evidence="5">Belongs to the BetVI family.</text>
</comment>
<comment type="sequence caution" evidence="5">
    <conflict type="frameshift">
        <sequence resource="EMBL-CDS" id="AAV33460"/>
    </conflict>
</comment>
<proteinExistence type="evidence at protein level"/>
<evidence type="ECO:0000250" key="1">
    <source>
        <dbReference type="UniProtKB" id="Q256S2"/>
    </source>
</evidence>
<evidence type="ECO:0000269" key="2">
    <source>
    </source>
</evidence>
<evidence type="ECO:0000269" key="3">
    <source>
    </source>
</evidence>
<evidence type="ECO:0000303" key="4">
    <source>
    </source>
</evidence>
<evidence type="ECO:0000305" key="5"/>
<protein>
    <recommendedName>
        <fullName evidence="4">Major strawberry allergen Fra a 1-A</fullName>
    </recommendedName>
    <alternativeName>
        <fullName evidence="5">Fra a 1.01A</fullName>
    </alternativeName>
    <allergenName evidence="5">Fra a 1</allergenName>
</protein>
<gene>
    <name evidence="4" type="primary">FRAA1A.1</name>
    <name evidence="4" type="synonym">FRAA1A.2</name>
</gene>
<keyword id="KW-0020">Allergen</keyword>
<keyword id="KW-0903">Direct protein sequencing</keyword>
<keyword id="KW-0292">Fruit ripening</keyword>
<keyword id="KW-0568">Pathogenesis-related protein</keyword>
<keyword id="KW-0611">Plant defense</keyword>
<reference key="1">
    <citation type="journal article" date="2007" name="Mol. Immunol.">
        <title>Cloning and sequencing of the Bet v 1-homologous allergen Fra a 1 in strawberry (Fragaria ananassa) shows the presence of an intron and little variability in amino acid sequence.</title>
        <authorList>
            <person name="Musidlowska-Persson A."/>
            <person name="Alm R."/>
            <person name="Emanuelsson C."/>
        </authorList>
    </citation>
    <scope>NUCLEOTIDE SEQUENCE [GENOMIC DNA]</scope>
    <scope>IDENTIFICATION BY MASS SPECTROMETRY</scope>
    <scope>ALLERGEN</scope>
</reference>
<reference key="2">
    <citation type="journal article" date="2018" name="Plant Cell Rep.">
        <title>Analysis of major paralogs encoding the Fra a 1 allergen based on their organ-specificity in Fragaria x ananassa.</title>
        <authorList>
            <person name="Ishibashi M."/>
            <person name="Nabe T."/>
            <person name="Nitta Y."/>
            <person name="Tsuruta H."/>
            <person name="Iduhara M."/>
            <person name="Uno Y."/>
        </authorList>
    </citation>
    <scope>NUCLEOTIDE SEQUENCE [MRNA]</scope>
    <scope>IDENTIFICATION BY MASS SPECTROMETRY</scope>
</reference>
<reference key="3">
    <citation type="journal article" date="2004" name="Allergy">
        <title>Bet v 1 homologues in strawberry identified as IgE-binding proteins and presumptive allergens.</title>
        <authorList>
            <person name="Karlsson A.L."/>
            <person name="Alm R."/>
            <person name="Ekstrand B."/>
            <person name="Fjelkner-Modig S."/>
            <person name="Schioett A."/>
            <person name="Bengtsson U."/>
            <person name="Bjoerk L."/>
            <person name="Hjernoe K."/>
            <person name="Roepstorff P."/>
            <person name="Emanuelsson C.S."/>
        </authorList>
    </citation>
    <scope>PROTEIN SEQUENCE OF 22-69</scope>
    <scope>ALLERGEN</scope>
</reference>
<reference key="4">
    <citation type="submission" date="2004-06" db="EMBL/GenBank/DDBJ databases">
        <title>Identification of novel genes involved in ripening of strawberry fruits.</title>
        <authorList>
            <person name="Balogh A."/>
            <person name="Koncz T."/>
            <person name="Kiss E."/>
            <person name="Heszky L.E."/>
        </authorList>
    </citation>
    <scope>NUCLEOTIDE SEQUENCE [MRNA] OF 87-160</scope>
    <source>
        <tissue>Receptacle</tissue>
    </source>
</reference>
<dbReference type="EMBL" id="DQ385511">
    <property type="protein sequence ID" value="ABD39049.1"/>
    <property type="molecule type" value="Genomic_DNA"/>
</dbReference>
<dbReference type="EMBL" id="AM084674">
    <property type="protein sequence ID" value="CAJ29538.1"/>
    <property type="molecule type" value="Genomic_DNA"/>
</dbReference>
<dbReference type="EMBL" id="LC214965">
    <property type="protein sequence ID" value="BBE27860.1"/>
    <property type="molecule type" value="mRNA"/>
</dbReference>
<dbReference type="EMBL" id="AY679601">
    <property type="protein sequence ID" value="AAV33460.1"/>
    <property type="status" value="ALT_FRAME"/>
    <property type="molecule type" value="mRNA"/>
</dbReference>
<dbReference type="SMR" id="Q5ULZ4"/>
<dbReference type="Allergome" id="11672">
    <property type="allergen name" value="Fra a 1.0102"/>
</dbReference>
<dbReference type="Allergome" id="2124">
    <property type="allergen name" value="Fra a 1"/>
</dbReference>
<dbReference type="Allergome" id="3286">
    <property type="allergen name" value="Fra a 1.0101"/>
</dbReference>
<dbReference type="GO" id="GO:0005737">
    <property type="term" value="C:cytoplasm"/>
    <property type="evidence" value="ECO:0007669"/>
    <property type="project" value="TreeGrafter"/>
</dbReference>
<dbReference type="GO" id="GO:0005634">
    <property type="term" value="C:nucleus"/>
    <property type="evidence" value="ECO:0007669"/>
    <property type="project" value="TreeGrafter"/>
</dbReference>
<dbReference type="GO" id="GO:0010427">
    <property type="term" value="F:abscisic acid binding"/>
    <property type="evidence" value="ECO:0007669"/>
    <property type="project" value="InterPro"/>
</dbReference>
<dbReference type="GO" id="GO:0004864">
    <property type="term" value="F:protein phosphatase inhibitor activity"/>
    <property type="evidence" value="ECO:0007669"/>
    <property type="project" value="InterPro"/>
</dbReference>
<dbReference type="GO" id="GO:0038023">
    <property type="term" value="F:signaling receptor activity"/>
    <property type="evidence" value="ECO:0007669"/>
    <property type="project" value="InterPro"/>
</dbReference>
<dbReference type="GO" id="GO:0009738">
    <property type="term" value="P:abscisic acid-activated signaling pathway"/>
    <property type="evidence" value="ECO:0007669"/>
    <property type="project" value="InterPro"/>
</dbReference>
<dbReference type="GO" id="GO:0006952">
    <property type="term" value="P:defense response"/>
    <property type="evidence" value="ECO:0007669"/>
    <property type="project" value="UniProtKB-KW"/>
</dbReference>
<dbReference type="GO" id="GO:0009835">
    <property type="term" value="P:fruit ripening"/>
    <property type="evidence" value="ECO:0007669"/>
    <property type="project" value="UniProtKB-KW"/>
</dbReference>
<dbReference type="CDD" id="cd07816">
    <property type="entry name" value="Bet_v1-like"/>
    <property type="match status" value="1"/>
</dbReference>
<dbReference type="FunFam" id="3.30.530.20:FF:000007">
    <property type="entry name" value="Major pollen allergen Bet v 1-A"/>
    <property type="match status" value="1"/>
</dbReference>
<dbReference type="Gene3D" id="3.30.530.20">
    <property type="match status" value="1"/>
</dbReference>
<dbReference type="InterPro" id="IPR000916">
    <property type="entry name" value="Bet_v_I/MLP"/>
</dbReference>
<dbReference type="InterPro" id="IPR024949">
    <property type="entry name" value="Bet_v_I_allergen"/>
</dbReference>
<dbReference type="InterPro" id="IPR050279">
    <property type="entry name" value="Plant_def-hormone_signal"/>
</dbReference>
<dbReference type="InterPro" id="IPR023393">
    <property type="entry name" value="START-like_dom_sf"/>
</dbReference>
<dbReference type="PANTHER" id="PTHR31213">
    <property type="entry name" value="OS08G0374000 PROTEIN-RELATED"/>
    <property type="match status" value="1"/>
</dbReference>
<dbReference type="PANTHER" id="PTHR31213:SF55">
    <property type="entry name" value="STRESS-INDUCED PROTEIN SAM22"/>
    <property type="match status" value="1"/>
</dbReference>
<dbReference type="Pfam" id="PF00407">
    <property type="entry name" value="Bet_v_1"/>
    <property type="match status" value="1"/>
</dbReference>
<dbReference type="PRINTS" id="PR00634">
    <property type="entry name" value="BETALLERGEN"/>
</dbReference>
<dbReference type="SUPFAM" id="SSF55961">
    <property type="entry name" value="Bet v1-like"/>
    <property type="match status" value="1"/>
</dbReference>
<name>FRA1A_FRAAN</name>
<organism>
    <name type="scientific">Fragaria ananassa</name>
    <name type="common">Strawberry</name>
    <name type="synonym">Fragaria chiloensis x Fragaria virginiana</name>
    <dbReference type="NCBI Taxonomy" id="3747"/>
    <lineage>
        <taxon>Eukaryota</taxon>
        <taxon>Viridiplantae</taxon>
        <taxon>Streptophyta</taxon>
        <taxon>Embryophyta</taxon>
        <taxon>Tracheophyta</taxon>
        <taxon>Spermatophyta</taxon>
        <taxon>Magnoliopsida</taxon>
        <taxon>eudicotyledons</taxon>
        <taxon>Gunneridae</taxon>
        <taxon>Pentapetalae</taxon>
        <taxon>rosids</taxon>
        <taxon>fabids</taxon>
        <taxon>Rosales</taxon>
        <taxon>Rosaceae</taxon>
        <taxon>Rosoideae</taxon>
        <taxon>Potentilleae</taxon>
        <taxon>Fragariinae</taxon>
        <taxon>Fragaria</taxon>
    </lineage>
</organism>
<feature type="chain" id="PRO_0000154189" description="Major strawberry allergen Fra a 1-A">
    <location>
        <begin position="1"/>
        <end position="160"/>
    </location>
</feature>
<feature type="sequence conflict" description="In Ref. 3; AA sequence." evidence="5" ref="3">
    <original>H</original>
    <variation>Q</variation>
    <location>
        <position position="64"/>
    </location>
</feature>
<feature type="sequence conflict" description="In Ref. 2; BBE27860." evidence="5" ref="2">
    <original>H</original>
    <variation>N</variation>
    <location>
        <position position="73"/>
    </location>
</feature>
<feature type="sequence conflict" description="In Ref. 4; AAV33460." evidence="5" ref="4">
    <original>NI</original>
    <variation>TL</variation>
    <location>
        <begin position="95"/>
        <end position="96"/>
    </location>
</feature>
<feature type="sequence conflict" description="In Ref. 4; AAV33460." evidence="5" ref="4">
    <original>HGGTV</original>
    <variation>SSSTI</variation>
    <location>
        <begin position="110"/>
        <end position="114"/>
    </location>
</feature>
<feature type="sequence conflict" description="In Ref. 4; AAV33460." evidence="5" ref="4">
    <original>S</original>
    <variation>A</variation>
    <location>
        <position position="142"/>
    </location>
</feature>
<accession>Q5ULZ4</accession>
<accession>A0A2Z6FJ89</accession>
<accession>Q3T923</accession>
<sequence>MGVYTYENEFTSDIPAPKLFKAFVLDADNLIPKIAPQAVKCAEILEGDGGPGTIKKITFGEGSHYGYVKHKIHSIDKENHTYSYSLIEGDALSDNIEKIDYETKLVSAPHGGTVIKTTSKYHTKGDVEIKEEHVKAGKEKASHLFKLIEGYLKDHPSEYN</sequence>